<protein>
    <recommendedName>
        <fullName evidence="1">Chorismate synthase</fullName>
        <shortName evidence="1">CS</shortName>
        <ecNumber evidence="1">4.2.3.5</ecNumber>
    </recommendedName>
    <alternativeName>
        <fullName evidence="1">5-enolpyruvylshikimate-3-phosphate phospholyase</fullName>
    </alternativeName>
</protein>
<evidence type="ECO:0000255" key="1">
    <source>
        <dbReference type="HAMAP-Rule" id="MF_00300"/>
    </source>
</evidence>
<evidence type="ECO:0000256" key="2">
    <source>
        <dbReference type="SAM" id="MobiDB-lite"/>
    </source>
</evidence>
<gene>
    <name evidence="1" type="primary">aroC</name>
    <name type="ordered locus">MMAR_2175</name>
</gene>
<name>AROC_MYCMM</name>
<proteinExistence type="inferred from homology"/>
<reference key="1">
    <citation type="journal article" date="2008" name="Genome Res.">
        <title>Insights from the complete genome sequence of Mycobacterium marinum on the evolution of Mycobacterium tuberculosis.</title>
        <authorList>
            <person name="Stinear T.P."/>
            <person name="Seemann T."/>
            <person name="Harrison P.F."/>
            <person name="Jenkin G.A."/>
            <person name="Davies J.K."/>
            <person name="Johnson P.D."/>
            <person name="Abdellah Z."/>
            <person name="Arrowsmith C."/>
            <person name="Chillingworth T."/>
            <person name="Churcher C."/>
            <person name="Clarke K."/>
            <person name="Cronin A."/>
            <person name="Davis P."/>
            <person name="Goodhead I."/>
            <person name="Holroyd N."/>
            <person name="Jagels K."/>
            <person name="Lord A."/>
            <person name="Moule S."/>
            <person name="Mungall K."/>
            <person name="Norbertczak H."/>
            <person name="Quail M.A."/>
            <person name="Rabbinowitsch E."/>
            <person name="Walker D."/>
            <person name="White B."/>
            <person name="Whitehead S."/>
            <person name="Small P.L."/>
            <person name="Brosch R."/>
            <person name="Ramakrishnan L."/>
            <person name="Fischbach M.A."/>
            <person name="Parkhill J."/>
            <person name="Cole S.T."/>
        </authorList>
    </citation>
    <scope>NUCLEOTIDE SEQUENCE [LARGE SCALE GENOMIC DNA]</scope>
    <source>
        <strain>ATCC BAA-535 / M</strain>
    </source>
</reference>
<keyword id="KW-0028">Amino-acid biosynthesis</keyword>
<keyword id="KW-0057">Aromatic amino acid biosynthesis</keyword>
<keyword id="KW-0274">FAD</keyword>
<keyword id="KW-0285">Flavoprotein</keyword>
<keyword id="KW-0288">FMN</keyword>
<keyword id="KW-0456">Lyase</keyword>
<keyword id="KW-0521">NADP</keyword>
<keyword id="KW-1185">Reference proteome</keyword>
<feature type="chain" id="PRO_1000115374" description="Chorismate synthase">
    <location>
        <begin position="1"/>
        <end position="407"/>
    </location>
</feature>
<feature type="region of interest" description="Disordered" evidence="2">
    <location>
        <begin position="275"/>
        <end position="308"/>
    </location>
</feature>
<feature type="compositionally biased region" description="Basic and acidic residues" evidence="2">
    <location>
        <begin position="275"/>
        <end position="284"/>
    </location>
</feature>
<feature type="binding site" evidence="1">
    <location>
        <position position="40"/>
    </location>
    <ligand>
        <name>NADP(+)</name>
        <dbReference type="ChEBI" id="CHEBI:58349"/>
    </ligand>
</feature>
<feature type="binding site" evidence="1">
    <location>
        <position position="46"/>
    </location>
    <ligand>
        <name>NADP(+)</name>
        <dbReference type="ChEBI" id="CHEBI:58349"/>
    </ligand>
</feature>
<feature type="binding site" evidence="1">
    <location>
        <begin position="138"/>
        <end position="140"/>
    </location>
    <ligand>
        <name>FMN</name>
        <dbReference type="ChEBI" id="CHEBI:58210"/>
    </ligand>
</feature>
<feature type="binding site" evidence="1">
    <location>
        <begin position="259"/>
        <end position="260"/>
    </location>
    <ligand>
        <name>FMN</name>
        <dbReference type="ChEBI" id="CHEBI:58210"/>
    </ligand>
</feature>
<feature type="binding site" evidence="1">
    <location>
        <position position="303"/>
    </location>
    <ligand>
        <name>FMN</name>
        <dbReference type="ChEBI" id="CHEBI:58210"/>
    </ligand>
</feature>
<feature type="binding site" evidence="1">
    <location>
        <begin position="318"/>
        <end position="322"/>
    </location>
    <ligand>
        <name>FMN</name>
        <dbReference type="ChEBI" id="CHEBI:58210"/>
    </ligand>
</feature>
<feature type="binding site" evidence="1">
    <location>
        <position position="344"/>
    </location>
    <ligand>
        <name>FMN</name>
        <dbReference type="ChEBI" id="CHEBI:58210"/>
    </ligand>
</feature>
<organism>
    <name type="scientific">Mycobacterium marinum (strain ATCC BAA-535 / M)</name>
    <dbReference type="NCBI Taxonomy" id="216594"/>
    <lineage>
        <taxon>Bacteria</taxon>
        <taxon>Bacillati</taxon>
        <taxon>Actinomycetota</taxon>
        <taxon>Actinomycetes</taxon>
        <taxon>Mycobacteriales</taxon>
        <taxon>Mycobacteriaceae</taxon>
        <taxon>Mycobacterium</taxon>
        <taxon>Mycobacterium ulcerans group</taxon>
    </lineage>
</organism>
<comment type="function">
    <text evidence="1">Catalyzes the anti-1,4-elimination of the C-3 phosphate and the C-6 proR hydrogen from 5-enolpyruvylshikimate-3-phosphate (EPSP) to yield chorismate, which is the branch point compound that serves as the starting substrate for the three terminal pathways of aromatic amino acid biosynthesis. This reaction introduces a second double bond into the aromatic ring system.</text>
</comment>
<comment type="catalytic activity">
    <reaction evidence="1">
        <text>5-O-(1-carboxyvinyl)-3-phosphoshikimate = chorismate + phosphate</text>
        <dbReference type="Rhea" id="RHEA:21020"/>
        <dbReference type="ChEBI" id="CHEBI:29748"/>
        <dbReference type="ChEBI" id="CHEBI:43474"/>
        <dbReference type="ChEBI" id="CHEBI:57701"/>
        <dbReference type="EC" id="4.2.3.5"/>
    </reaction>
</comment>
<comment type="cofactor">
    <cofactor evidence="1">
        <name>FMNH2</name>
        <dbReference type="ChEBI" id="CHEBI:57618"/>
    </cofactor>
    <text evidence="1">Reduced FMN (FMNH(2)).</text>
</comment>
<comment type="pathway">
    <text evidence="1">Metabolic intermediate biosynthesis; chorismate biosynthesis; chorismate from D-erythrose 4-phosphate and phosphoenolpyruvate: step 7/7.</text>
</comment>
<comment type="subunit">
    <text evidence="1">Homotetramer.</text>
</comment>
<comment type="similarity">
    <text evidence="1">Belongs to the chorismate synthase family.</text>
</comment>
<accession>B2HNC6</accession>
<dbReference type="EC" id="4.2.3.5" evidence="1"/>
<dbReference type="EMBL" id="CP000854">
    <property type="protein sequence ID" value="ACC40624.1"/>
    <property type="molecule type" value="Genomic_DNA"/>
</dbReference>
<dbReference type="RefSeq" id="WP_012393940.1">
    <property type="nucleotide sequence ID" value="NC_010612.1"/>
</dbReference>
<dbReference type="SMR" id="B2HNC6"/>
<dbReference type="STRING" id="216594.MMAR_2175"/>
<dbReference type="KEGG" id="mmi:MMAR_2175"/>
<dbReference type="eggNOG" id="COG0082">
    <property type="taxonomic scope" value="Bacteria"/>
</dbReference>
<dbReference type="HOGENOM" id="CLU_034547_2_0_11"/>
<dbReference type="OrthoDB" id="9771806at2"/>
<dbReference type="UniPathway" id="UPA00053">
    <property type="reaction ID" value="UER00090"/>
</dbReference>
<dbReference type="Proteomes" id="UP000001190">
    <property type="component" value="Chromosome"/>
</dbReference>
<dbReference type="GO" id="GO:0005829">
    <property type="term" value="C:cytosol"/>
    <property type="evidence" value="ECO:0007669"/>
    <property type="project" value="TreeGrafter"/>
</dbReference>
<dbReference type="GO" id="GO:0004107">
    <property type="term" value="F:chorismate synthase activity"/>
    <property type="evidence" value="ECO:0007669"/>
    <property type="project" value="UniProtKB-UniRule"/>
</dbReference>
<dbReference type="GO" id="GO:0010181">
    <property type="term" value="F:FMN binding"/>
    <property type="evidence" value="ECO:0007669"/>
    <property type="project" value="TreeGrafter"/>
</dbReference>
<dbReference type="GO" id="GO:0008652">
    <property type="term" value="P:amino acid biosynthetic process"/>
    <property type="evidence" value="ECO:0007669"/>
    <property type="project" value="UniProtKB-KW"/>
</dbReference>
<dbReference type="GO" id="GO:0009073">
    <property type="term" value="P:aromatic amino acid family biosynthetic process"/>
    <property type="evidence" value="ECO:0007669"/>
    <property type="project" value="UniProtKB-KW"/>
</dbReference>
<dbReference type="GO" id="GO:0009423">
    <property type="term" value="P:chorismate biosynthetic process"/>
    <property type="evidence" value="ECO:0007669"/>
    <property type="project" value="UniProtKB-UniRule"/>
</dbReference>
<dbReference type="CDD" id="cd07304">
    <property type="entry name" value="Chorismate_synthase"/>
    <property type="match status" value="1"/>
</dbReference>
<dbReference type="FunFam" id="3.60.150.10:FF:000002">
    <property type="entry name" value="Chorismate synthase"/>
    <property type="match status" value="1"/>
</dbReference>
<dbReference type="Gene3D" id="3.60.150.10">
    <property type="entry name" value="Chorismate synthase AroC"/>
    <property type="match status" value="1"/>
</dbReference>
<dbReference type="HAMAP" id="MF_00300">
    <property type="entry name" value="Chorismate_synth"/>
    <property type="match status" value="1"/>
</dbReference>
<dbReference type="InterPro" id="IPR000453">
    <property type="entry name" value="Chorismate_synth"/>
</dbReference>
<dbReference type="InterPro" id="IPR035904">
    <property type="entry name" value="Chorismate_synth_AroC_sf"/>
</dbReference>
<dbReference type="InterPro" id="IPR020541">
    <property type="entry name" value="Chorismate_synthase_CS"/>
</dbReference>
<dbReference type="NCBIfam" id="TIGR00033">
    <property type="entry name" value="aroC"/>
    <property type="match status" value="1"/>
</dbReference>
<dbReference type="NCBIfam" id="NF003793">
    <property type="entry name" value="PRK05382.1"/>
    <property type="match status" value="1"/>
</dbReference>
<dbReference type="PANTHER" id="PTHR21085">
    <property type="entry name" value="CHORISMATE SYNTHASE"/>
    <property type="match status" value="1"/>
</dbReference>
<dbReference type="PANTHER" id="PTHR21085:SF0">
    <property type="entry name" value="CHORISMATE SYNTHASE"/>
    <property type="match status" value="1"/>
</dbReference>
<dbReference type="Pfam" id="PF01264">
    <property type="entry name" value="Chorismate_synt"/>
    <property type="match status" value="1"/>
</dbReference>
<dbReference type="PIRSF" id="PIRSF001456">
    <property type="entry name" value="Chorismate_synth"/>
    <property type="match status" value="1"/>
</dbReference>
<dbReference type="SUPFAM" id="SSF103263">
    <property type="entry name" value="Chorismate synthase, AroC"/>
    <property type="match status" value="1"/>
</dbReference>
<dbReference type="PROSITE" id="PS00787">
    <property type="entry name" value="CHORISMATE_SYNTHASE_1"/>
    <property type="match status" value="1"/>
</dbReference>
<dbReference type="PROSITE" id="PS00788">
    <property type="entry name" value="CHORISMATE_SYNTHASE_2"/>
    <property type="match status" value="1"/>
</dbReference>
<dbReference type="PROSITE" id="PS00789">
    <property type="entry name" value="CHORISMATE_SYNTHASE_3"/>
    <property type="match status" value="1"/>
</dbReference>
<sequence length="407" mass="42546">MLRWITAGESHGRALVALVDGMVAGVEVTSTEIADQLARRRLGYGRGARMAFERDAVTVLSGLRHGSTLGGPIAIEIGNTEWPKWEAVMAADPLDPAAAAELENSARNAPLTRPRPGHADYAGMLKYGFDDARPVLERASARETAARVAAGTVARAFLRQALGVEVLSHVVSIGASAPYDGPPPQPEDLPAIDASPVRAFDGQAEKSMIAEIEAAKKDGDTLGGVVEVVALGLPVGLGSFTSGENRLDSQLAAAVMGIQAIKGVEIGDGFETARRRGSRAHDEMYPGTDGVVRSTNRAGGLEGGMTNGQPLRVRAAMKPISTVPKALATVDLATGDEAVAIHQRSDVCAVPAAAVVVETMVALVLARVTLEKFGGDSLAETRRNIEAYQRSVADREAPAARARAIRG</sequence>